<proteinExistence type="predicted"/>
<gene>
    <name type="ordered locus">MJ1572.1</name>
</gene>
<organism>
    <name type="scientific">Methanocaldococcus jannaschii (strain ATCC 43067 / DSM 2661 / JAL-1 / JCM 10045 / NBRC 100440)</name>
    <name type="common">Methanococcus jannaschii</name>
    <dbReference type="NCBI Taxonomy" id="243232"/>
    <lineage>
        <taxon>Archaea</taxon>
        <taxon>Methanobacteriati</taxon>
        <taxon>Methanobacteriota</taxon>
        <taxon>Methanomada group</taxon>
        <taxon>Methanococci</taxon>
        <taxon>Methanococcales</taxon>
        <taxon>Methanocaldococcaceae</taxon>
        <taxon>Methanocaldococcus</taxon>
    </lineage>
</organism>
<sequence length="112" mass="12917">MHAIEHNIIKITPIFTYIDSREIGGYSYERFNRNLFKDKAVIFIYDGNEGGFGLAEILYENAEKLLNKSLEHLKNCNCADGCPLCIYSTKCGTFNEFLDKWQAIRILEKLLS</sequence>
<name>YF7B_METJA</name>
<dbReference type="EMBL" id="L77117">
    <property type="protein sequence ID" value="AAB99596.1"/>
    <property type="molecule type" value="Genomic_DNA"/>
</dbReference>
<dbReference type="RefSeq" id="WP_010871097.1">
    <property type="nucleotide sequence ID" value="NC_000909.1"/>
</dbReference>
<dbReference type="SMR" id="P81248"/>
<dbReference type="STRING" id="243232.MJ_1572.1"/>
<dbReference type="PaxDb" id="243232-MJ_1572.1"/>
<dbReference type="EnsemblBacteria" id="AAB99596">
    <property type="protein sequence ID" value="AAB99596"/>
    <property type="gene ID" value="MJ_1572.1"/>
</dbReference>
<dbReference type="GeneID" id="63606508"/>
<dbReference type="KEGG" id="mja:MJ_1572.1"/>
<dbReference type="eggNOG" id="arCOG00555">
    <property type="taxonomic scope" value="Archaea"/>
</dbReference>
<dbReference type="HOGENOM" id="CLU_2140207_0_0_2"/>
<dbReference type="InParanoid" id="P81248"/>
<dbReference type="OrthoDB" id="36796at2157"/>
<dbReference type="Proteomes" id="UP000000805">
    <property type="component" value="Chromosome"/>
</dbReference>
<dbReference type="InterPro" id="IPR018973">
    <property type="entry name" value="MZB"/>
</dbReference>
<dbReference type="PANTHER" id="PTHR47957">
    <property type="entry name" value="ATP-DEPENDENT HELICASE HRQ1"/>
    <property type="match status" value="1"/>
</dbReference>
<dbReference type="PANTHER" id="PTHR47957:SF3">
    <property type="entry name" value="ATP-DEPENDENT HELICASE HRQ1"/>
    <property type="match status" value="1"/>
</dbReference>
<dbReference type="Pfam" id="PF09369">
    <property type="entry name" value="MZB"/>
    <property type="match status" value="1"/>
</dbReference>
<feature type="chain" id="PRO_0000107420" description="Uncharacterized protein MJ1572.1">
    <location>
        <begin position="1"/>
        <end position="112"/>
    </location>
</feature>
<accession>P81248</accession>
<keyword id="KW-1185">Reference proteome</keyword>
<protein>
    <recommendedName>
        <fullName>Uncharacterized protein MJ1572.1</fullName>
    </recommendedName>
</protein>
<reference key="1">
    <citation type="journal article" date="1996" name="Science">
        <title>Complete genome sequence of the methanogenic archaeon, Methanococcus jannaschii.</title>
        <authorList>
            <person name="Bult C.J."/>
            <person name="White O."/>
            <person name="Olsen G.J."/>
            <person name="Zhou L."/>
            <person name="Fleischmann R.D."/>
            <person name="Sutton G.G."/>
            <person name="Blake J.A."/>
            <person name="FitzGerald L.M."/>
            <person name="Clayton R.A."/>
            <person name="Gocayne J.D."/>
            <person name="Kerlavage A.R."/>
            <person name="Dougherty B.A."/>
            <person name="Tomb J.-F."/>
            <person name="Adams M.D."/>
            <person name="Reich C.I."/>
            <person name="Overbeek R."/>
            <person name="Kirkness E.F."/>
            <person name="Weinstock K.G."/>
            <person name="Merrick J.M."/>
            <person name="Glodek A."/>
            <person name="Scott J.L."/>
            <person name="Geoghagen N.S.M."/>
            <person name="Weidman J.F."/>
            <person name="Fuhrmann J.L."/>
            <person name="Nguyen D."/>
            <person name="Utterback T.R."/>
            <person name="Kelley J.M."/>
            <person name="Peterson J.D."/>
            <person name="Sadow P.W."/>
            <person name="Hanna M.C."/>
            <person name="Cotton M.D."/>
            <person name="Roberts K.M."/>
            <person name="Hurst M.A."/>
            <person name="Kaine B.P."/>
            <person name="Borodovsky M."/>
            <person name="Klenk H.-P."/>
            <person name="Fraser C.M."/>
            <person name="Smith H.O."/>
            <person name="Woese C.R."/>
            <person name="Venter J.C."/>
        </authorList>
    </citation>
    <scope>NUCLEOTIDE SEQUENCE [LARGE SCALE GENOMIC DNA]</scope>
    <source>
        <strain>ATCC 43067 / DSM 2661 / JAL-1 / JCM 10045 / NBRC 100440</strain>
    </source>
</reference>